<comment type="function">
    <text>The biological function of streptavidin is not known. Forms a strong non-covalent specific complex with biotin (one molecule of biotin per subunit of streptavidin).</text>
</comment>
<comment type="subunit">
    <text>Homotetramer.</text>
</comment>
<comment type="subcellular location">
    <subcellularLocation>
        <location>Secreted</location>
    </subcellularLocation>
</comment>
<comment type="similarity">
    <text evidence="3">Belongs to the avidin/streptavidin family.</text>
</comment>
<protein>
    <recommendedName>
        <fullName>Streptavidin</fullName>
    </recommendedName>
</protein>
<feature type="signal peptide" evidence="2">
    <location>
        <begin position="1"/>
        <end position="24"/>
    </location>
</feature>
<feature type="chain" id="PRO_0000002729" description="Streptavidin">
    <location>
        <begin position="25"/>
        <end position="183"/>
    </location>
</feature>
<feature type="domain" description="Avidin-like" evidence="1">
    <location>
        <begin position="37"/>
        <end position="159"/>
    </location>
</feature>
<feature type="short sequence motif" description="Cell attachment site; atypical">
    <location>
        <begin position="83"/>
        <end position="85"/>
    </location>
</feature>
<feature type="binding site">
    <location>
        <position position="67"/>
    </location>
    <ligand>
        <name>biotin</name>
        <dbReference type="ChEBI" id="CHEBI:57586"/>
    </ligand>
</feature>
<feature type="binding site">
    <location>
        <position position="78"/>
    </location>
    <ligand>
        <name>biotin</name>
        <dbReference type="ChEBI" id="CHEBI:57586"/>
    </ligand>
</feature>
<feature type="binding site">
    <location>
        <position position="116"/>
    </location>
    <ligand>
        <name>biotin</name>
        <dbReference type="ChEBI" id="CHEBI:57586"/>
    </ligand>
</feature>
<feature type="binding site">
    <location>
        <position position="132"/>
    </location>
    <ligand>
        <name>biotin</name>
        <dbReference type="ChEBI" id="CHEBI:57586"/>
    </ligand>
</feature>
<feature type="binding site">
    <location>
        <position position="144"/>
    </location>
    <ligand>
        <name>biotin</name>
        <dbReference type="ChEBI" id="CHEBI:57586"/>
    </ligand>
</feature>
<feature type="turn" evidence="6">
    <location>
        <begin position="39"/>
        <end position="41"/>
    </location>
</feature>
<feature type="strand" evidence="6">
    <location>
        <begin position="43"/>
        <end position="47"/>
    </location>
</feature>
<feature type="strand" evidence="10">
    <location>
        <begin position="48"/>
        <end position="50"/>
    </location>
</feature>
<feature type="strand" evidence="6">
    <location>
        <begin position="52"/>
        <end position="57"/>
    </location>
</feature>
<feature type="strand" evidence="6">
    <location>
        <begin position="61"/>
        <end position="68"/>
    </location>
</feature>
<feature type="strand" evidence="6">
    <location>
        <begin position="70"/>
        <end position="73"/>
    </location>
</feature>
<feature type="helix" evidence="9">
    <location>
        <begin position="74"/>
        <end position="76"/>
    </location>
</feature>
<feature type="strand" evidence="6">
    <location>
        <begin position="78"/>
        <end position="84"/>
    </location>
</feature>
<feature type="strand" evidence="6">
    <location>
        <begin position="90"/>
        <end position="92"/>
    </location>
</feature>
<feature type="strand" evidence="6">
    <location>
        <begin position="95"/>
        <end position="104"/>
    </location>
</feature>
<feature type="strand" evidence="6">
    <location>
        <begin position="109"/>
        <end position="121"/>
    </location>
</feature>
<feature type="strand" evidence="7">
    <location>
        <begin position="123"/>
        <end position="125"/>
    </location>
</feature>
<feature type="strand" evidence="6">
    <location>
        <begin position="127"/>
        <end position="136"/>
    </location>
</feature>
<feature type="helix" evidence="6">
    <location>
        <begin position="140"/>
        <end position="145"/>
    </location>
</feature>
<feature type="strand" evidence="6">
    <location>
        <begin position="147"/>
        <end position="156"/>
    </location>
</feature>
<feature type="helix" evidence="4">
    <location>
        <begin position="161"/>
        <end position="163"/>
    </location>
</feature>
<feature type="helix" evidence="8">
    <location>
        <begin position="168"/>
        <end position="172"/>
    </location>
</feature>
<feature type="helix" evidence="5">
    <location>
        <begin position="178"/>
        <end position="180"/>
    </location>
</feature>
<organism>
    <name type="scientific">Streptomyces avidinii</name>
    <dbReference type="NCBI Taxonomy" id="1895"/>
    <lineage>
        <taxon>Bacteria</taxon>
        <taxon>Bacillati</taxon>
        <taxon>Actinomycetota</taxon>
        <taxon>Actinomycetes</taxon>
        <taxon>Kitasatosporales</taxon>
        <taxon>Streptomycetaceae</taxon>
        <taxon>Streptomyces</taxon>
    </lineage>
</organism>
<proteinExistence type="evidence at protein level"/>
<accession>P22629</accession>
<keyword id="KW-0002">3D-structure</keyword>
<keyword id="KW-0092">Biotin</keyword>
<keyword id="KW-0903">Direct protein sequencing</keyword>
<keyword id="KW-0964">Secreted</keyword>
<keyword id="KW-0732">Signal</keyword>
<evidence type="ECO:0000255" key="1">
    <source>
        <dbReference type="PROSITE-ProRule" id="PRU00656"/>
    </source>
</evidence>
<evidence type="ECO:0000269" key="2">
    <source>
    </source>
</evidence>
<evidence type="ECO:0000305" key="3"/>
<evidence type="ECO:0007829" key="4">
    <source>
        <dbReference type="PDB" id="1SWF"/>
    </source>
</evidence>
<evidence type="ECO:0007829" key="5">
    <source>
        <dbReference type="PDB" id="2BC3"/>
    </source>
</evidence>
<evidence type="ECO:0007829" key="6">
    <source>
        <dbReference type="PDB" id="2F01"/>
    </source>
</evidence>
<evidence type="ECO:0007829" key="7">
    <source>
        <dbReference type="PDB" id="3RY1"/>
    </source>
</evidence>
<evidence type="ECO:0007829" key="8">
    <source>
        <dbReference type="PDB" id="4GDA"/>
    </source>
</evidence>
<evidence type="ECO:0007829" key="9">
    <source>
        <dbReference type="PDB" id="5N8B"/>
    </source>
</evidence>
<evidence type="ECO:0007829" key="10">
    <source>
        <dbReference type="PDB" id="5N8W"/>
    </source>
</evidence>
<name>SAV_STRAV</name>
<reference key="1">
    <citation type="journal article" date="1986" name="Nucleic Acids Res.">
        <title>Molecular cloning and nucleotide sequence of the streptavidin gene.</title>
        <authorList>
            <person name="Argarana C.E."/>
            <person name="Kuntz I.D."/>
            <person name="Birken S."/>
            <person name="Axel R."/>
            <person name="Cantor C.R."/>
        </authorList>
    </citation>
    <scope>NUCLEOTIDE SEQUENCE [GENOMIC DNA]</scope>
    <scope>PROTEIN SEQUENCE OF 25-64</scope>
</reference>
<reference key="2">
    <citation type="journal article" date="1988" name="Biochem. J.">
        <title>Studies on the biotin-binding site of streptavidin. Tryptophan residues involved in the active site.</title>
        <authorList>
            <person name="Gitlin G."/>
            <person name="Bayer E.A."/>
            <person name="Wilchek M."/>
        </authorList>
    </citation>
    <scope>IMPORTANCE OF TRP IN BIOTIN-BINDING</scope>
</reference>
<reference key="3">
    <citation type="journal article" date="1990" name="Biochem. J.">
        <title>Studies on the biotin-binding sites of avidin and streptavidin. Tyrosine residues are involved in the binding site.</title>
        <authorList>
            <person name="Gitlin G."/>
            <person name="Bayer E.A."/>
            <person name="Wilchek M."/>
        </authorList>
    </citation>
    <scope>IMPORTANCE OF TYR IN BIOTIN-BINDING</scope>
</reference>
<reference key="4">
    <citation type="journal article" date="1990" name="Biochem. Biophys. Res. Commun.">
        <title>Streptavidin contains an RYD sequence which mimics the RGD receptor domain of fibronectin.</title>
        <authorList>
            <person name="Alon R."/>
            <person name="Bayer E.A."/>
            <person name="Wilchek M."/>
        </authorList>
    </citation>
    <scope>CELL-BINDING</scope>
</reference>
<reference key="5">
    <citation type="journal article" date="1989" name="Science">
        <title>Structural origins of high-affinity biotin binding to streptavidin.</title>
        <authorList>
            <person name="Weber P.C."/>
            <person name="Ohlendorf D.H."/>
            <person name="Wendoloski J.J."/>
            <person name="Salemme F.R."/>
        </authorList>
    </citation>
    <scope>X-RAY CRYSTALLOGRAPHY (1.7 ANGSTROMS) OF 37-157</scope>
</reference>
<reference key="6">
    <citation type="journal article" date="1997" name="Protein Sci.">
        <title>Structural studies of the streptavidin binding loop.</title>
        <authorList>
            <person name="Freitag S."/>
            <person name="le Trong I."/>
            <person name="Klumb L."/>
            <person name="Stayton P.S."/>
            <person name="Stenkamp R.E."/>
        </authorList>
    </citation>
    <scope>X-RAY CRYSTALLOGRAPHY (2.0 ANGSTROMS) OF 40-157</scope>
</reference>
<reference key="7">
    <citation type="journal article" date="1997" name="J. Biol. Chem.">
        <title>In crystals of complexes of streptavidin with peptide ligands containing the HPQ sequence the pKa of the peptide histidine is less than 3.0.</title>
        <authorList>
            <person name="Katz B.A."/>
            <person name="Cass R.T."/>
        </authorList>
    </citation>
    <scope>X-RAY CRYSTALLOGRAPHY (1.45 ANGSTROMS) OF 37-157</scope>
</reference>
<reference key="8">
    <citation type="journal article" date="1997" name="J. Mol. Biol.">
        <title>Binding of biotin to streptavidin stabilizes intersubunit salt bridges between Asp61 and His87 at low pH.</title>
        <authorList>
            <person name="Katz B.A."/>
        </authorList>
    </citation>
    <scope>X-RAY CRYSTALLOGRAPHY (1.6 ANGSTROMS) OF 37-157</scope>
</reference>
<reference key="9">
    <citation type="journal article" date="1998" name="J. Mol. Biol.">
        <title>Structural studies of binding site tryptophan mutants in the high-affinity streptavidin-biotin complex.</title>
        <authorList>
            <person name="Freitag S."/>
            <person name="le Trong I."/>
            <person name="Chilkoti A."/>
            <person name="Klumb L.A."/>
            <person name="Stayton P.S."/>
            <person name="Stenkamp R.E."/>
        </authorList>
    </citation>
    <scope>X-RAY CRYSTALLOGRAPHY (2.0 ANGSTROMS) OF 37-157 OF MUTANTS</scope>
</reference>
<sequence>MRKIVVAAIAVSLTTVSITASASADPSKDSKAQVSAAEAGITGTWYNQLGSTFIVTAGADGALTGTYESAVGNAESRYVLTGRYDSAPATDGSGTALGWTVAWKNNYRNAHSATTWSGQYVGGAEARINTQWLLTSGTTEANAWKSTLVGHDTFTKVKPSAASIDAAKKAGVNNGNPLDAVQQ</sequence>
<dbReference type="EMBL" id="X03591">
    <property type="protein sequence ID" value="CAA27265.1"/>
    <property type="molecule type" value="Genomic_DNA"/>
</dbReference>
<dbReference type="PIR" id="A23513">
    <property type="entry name" value="A23513"/>
</dbReference>
<dbReference type="RefSeq" id="WP_229920816.1">
    <property type="nucleotide sequence ID" value="NZ_BMVL01000018.1"/>
</dbReference>
<dbReference type="PDB" id="1DF8">
    <property type="method" value="X-ray"/>
    <property type="resolution" value="1.51 A"/>
    <property type="chains" value="A/B=37-163"/>
</dbReference>
<dbReference type="PDB" id="1HQQ">
    <property type="method" value="X-ray"/>
    <property type="resolution" value="1.70 A"/>
    <property type="chains" value="A/B/C/D=36-163"/>
</dbReference>
<dbReference type="PDB" id="1HXL">
    <property type="method" value="X-ray"/>
    <property type="resolution" value="1.80 A"/>
    <property type="chains" value="A/B=36-163"/>
</dbReference>
<dbReference type="PDB" id="1HXZ">
    <property type="method" value="X-ray"/>
    <property type="resolution" value="1.80 A"/>
    <property type="chains" value="A/B=36-163"/>
</dbReference>
<dbReference type="PDB" id="1HY2">
    <property type="method" value="X-ray"/>
    <property type="resolution" value="2.00 A"/>
    <property type="chains" value="A/B/C/D=36-163"/>
</dbReference>
<dbReference type="PDB" id="1I9H">
    <property type="method" value="X-ray"/>
    <property type="resolution" value="2.40 A"/>
    <property type="chains" value="A/B=25-163"/>
</dbReference>
<dbReference type="PDB" id="1KFF">
    <property type="method" value="X-ray"/>
    <property type="resolution" value="1.90 A"/>
    <property type="chains" value="A/B/C/D=38-163"/>
</dbReference>
<dbReference type="PDB" id="1KL3">
    <property type="method" value="X-ray"/>
    <property type="resolution" value="1.70 A"/>
    <property type="chains" value="A/B/C/D=38-163"/>
</dbReference>
<dbReference type="PDB" id="1KL4">
    <property type="method" value="X-ray"/>
    <property type="resolution" value="1.70 A"/>
    <property type="chains" value="A/B/C/D=38-163"/>
</dbReference>
<dbReference type="PDB" id="1KL5">
    <property type="method" value="X-ray"/>
    <property type="resolution" value="1.80 A"/>
    <property type="chains" value="A/B/C/D=38-163"/>
</dbReference>
<dbReference type="PDB" id="1LCV">
    <property type="method" value="X-ray"/>
    <property type="resolution" value="2.30 A"/>
    <property type="chains" value="A/B=39-159"/>
</dbReference>
<dbReference type="PDB" id="1LCW">
    <property type="method" value="X-ray"/>
    <property type="resolution" value="2.20 A"/>
    <property type="chains" value="A/B=39-159"/>
</dbReference>
<dbReference type="PDB" id="1LCZ">
    <property type="method" value="X-ray"/>
    <property type="resolution" value="1.95 A"/>
    <property type="chains" value="A/B=25-159"/>
</dbReference>
<dbReference type="PDB" id="1LUQ">
    <property type="method" value="X-ray"/>
    <property type="resolution" value="0.96 A"/>
    <property type="chains" value="A/B=37-163"/>
</dbReference>
<dbReference type="PDB" id="1MEP">
    <property type="method" value="X-ray"/>
    <property type="resolution" value="1.65 A"/>
    <property type="chains" value="A/B/C/D=37-163"/>
</dbReference>
<dbReference type="PDB" id="1MK5">
    <property type="method" value="X-ray"/>
    <property type="resolution" value="1.40 A"/>
    <property type="chains" value="A/B=37-163"/>
</dbReference>
<dbReference type="PDB" id="1MM9">
    <property type="method" value="X-ray"/>
    <property type="resolution" value="1.66 A"/>
    <property type="chains" value="A=37-163"/>
</dbReference>
<dbReference type="PDB" id="1MOY">
    <property type="method" value="X-ray"/>
    <property type="resolution" value="1.55 A"/>
    <property type="chains" value="A=37-163"/>
</dbReference>
<dbReference type="PDB" id="1N43">
    <property type="method" value="X-ray"/>
    <property type="resolution" value="1.89 A"/>
    <property type="chains" value="A/B/C/D=37-163"/>
</dbReference>
<dbReference type="PDB" id="1N4J">
    <property type="method" value="X-ray"/>
    <property type="resolution" value="2.18 A"/>
    <property type="chains" value="A=37-163"/>
</dbReference>
<dbReference type="PDB" id="1N7Y">
    <property type="method" value="X-ray"/>
    <property type="resolution" value="1.96 A"/>
    <property type="chains" value="A/B/C/D=37-163"/>
</dbReference>
<dbReference type="PDB" id="1N9M">
    <property type="method" value="X-ray"/>
    <property type="resolution" value="1.60 A"/>
    <property type="chains" value="A/B/C/D=37-163"/>
</dbReference>
<dbReference type="PDB" id="1N9Y">
    <property type="method" value="X-ray"/>
    <property type="resolution" value="1.53 A"/>
    <property type="chains" value="A/B/C/D=37-163"/>
</dbReference>
<dbReference type="PDB" id="1NBX">
    <property type="method" value="X-ray"/>
    <property type="resolution" value="1.70 A"/>
    <property type="chains" value="A/B/C/D=37-163"/>
</dbReference>
<dbReference type="PDB" id="1NC9">
    <property type="method" value="X-ray"/>
    <property type="resolution" value="1.80 A"/>
    <property type="chains" value="A/B/C/D=37-163"/>
</dbReference>
<dbReference type="PDB" id="1NDJ">
    <property type="method" value="X-ray"/>
    <property type="resolution" value="1.81 A"/>
    <property type="chains" value="A/B/C/D=37-163"/>
</dbReference>
<dbReference type="PDB" id="1NQM">
    <property type="method" value="X-ray"/>
    <property type="resolution" value="1.70 A"/>
    <property type="chains" value="A/B/C/D=24-159"/>
</dbReference>
<dbReference type="PDB" id="1PTS">
    <property type="method" value="X-ray"/>
    <property type="resolution" value="2.00 A"/>
    <property type="chains" value="A/B=37-157"/>
</dbReference>
<dbReference type="PDB" id="1RST">
    <property type="method" value="X-ray"/>
    <property type="resolution" value="1.70 A"/>
    <property type="chains" value="B=38-163"/>
</dbReference>
<dbReference type="PDB" id="1RSU">
    <property type="method" value="X-ray"/>
    <property type="resolution" value="1.70 A"/>
    <property type="chains" value="B=38-163"/>
</dbReference>
<dbReference type="PDB" id="1RXH">
    <property type="method" value="X-ray"/>
    <property type="resolution" value="2.90 A"/>
    <property type="chains" value="A/B=37-163"/>
</dbReference>
<dbReference type="PDB" id="1RXJ">
    <property type="method" value="X-ray"/>
    <property type="resolution" value="1.14 A"/>
    <property type="chains" value="A/B/C/D=39-159"/>
</dbReference>
<dbReference type="PDB" id="1RXK">
    <property type="method" value="X-ray"/>
    <property type="resolution" value="1.70 A"/>
    <property type="chains" value="A/B=38-159"/>
</dbReference>
<dbReference type="PDB" id="1SLD">
    <property type="method" value="X-ray"/>
    <property type="resolution" value="2.50 A"/>
    <property type="chains" value="B=25-159"/>
</dbReference>
<dbReference type="PDB" id="1SLE">
    <property type="method" value="X-ray"/>
    <property type="resolution" value="2.00 A"/>
    <property type="chains" value="B/D=25-159"/>
</dbReference>
<dbReference type="PDB" id="1SLF">
    <property type="method" value="X-ray"/>
    <property type="resolution" value="1.76 A"/>
    <property type="chains" value="B/D=25-159"/>
</dbReference>
<dbReference type="PDB" id="1SLG">
    <property type="method" value="X-ray"/>
    <property type="resolution" value="1.76 A"/>
    <property type="chains" value="B/D=25-159"/>
</dbReference>
<dbReference type="PDB" id="1SRE">
    <property type="method" value="X-ray"/>
    <property type="resolution" value="1.78 A"/>
    <property type="chains" value="A/B=37-157"/>
</dbReference>
<dbReference type="PDB" id="1SRF">
    <property type="method" value="X-ray"/>
    <property type="resolution" value="2.00 A"/>
    <property type="chains" value="A/B=37-157"/>
</dbReference>
<dbReference type="PDB" id="1SRG">
    <property type="method" value="X-ray"/>
    <property type="resolution" value="1.80 A"/>
    <property type="chains" value="A/B=37-157"/>
</dbReference>
<dbReference type="PDB" id="1SRH">
    <property type="method" value="X-ray"/>
    <property type="resolution" value="2.20 A"/>
    <property type="chains" value="A/B=37-157"/>
</dbReference>
<dbReference type="PDB" id="1SRI">
    <property type="method" value="X-ray"/>
    <property type="resolution" value="1.65 A"/>
    <property type="chains" value="A/B=37-157"/>
</dbReference>
<dbReference type="PDB" id="1SRJ">
    <property type="method" value="X-ray"/>
    <property type="resolution" value="1.80 A"/>
    <property type="chains" value="A/B=37-157"/>
</dbReference>
<dbReference type="PDB" id="1STP">
    <property type="method" value="X-ray"/>
    <property type="resolution" value="2.60 A"/>
    <property type="chains" value="A=25-183"/>
</dbReference>
<dbReference type="PDB" id="1STR">
    <property type="method" value="X-ray"/>
    <property type="resolution" value="1.80 A"/>
    <property type="chains" value="B/D=37-159"/>
</dbReference>
<dbReference type="PDB" id="1STS">
    <property type="method" value="X-ray"/>
    <property type="resolution" value="1.95 A"/>
    <property type="chains" value="B/D=37-159"/>
</dbReference>
<dbReference type="PDB" id="1SWA">
    <property type="method" value="X-ray"/>
    <property type="resolution" value="1.90 A"/>
    <property type="chains" value="A/B/C/D=37-163"/>
</dbReference>
<dbReference type="PDB" id="1SWB">
    <property type="method" value="X-ray"/>
    <property type="resolution" value="1.85 A"/>
    <property type="chains" value="A/B/C/D=37-163"/>
</dbReference>
<dbReference type="PDB" id="1SWC">
    <property type="method" value="X-ray"/>
    <property type="resolution" value="1.80 A"/>
    <property type="chains" value="A/B/C/D=37-163"/>
</dbReference>
<dbReference type="PDB" id="1SWD">
    <property type="method" value="X-ray"/>
    <property type="resolution" value="1.90 A"/>
    <property type="chains" value="A/B/C/D=37-163"/>
</dbReference>
<dbReference type="PDB" id="1SWE">
    <property type="method" value="X-ray"/>
    <property type="resolution" value="2.06 A"/>
    <property type="chains" value="A/B/C/D=37-163"/>
</dbReference>
<dbReference type="PDB" id="1SWF">
    <property type="method" value="X-ray"/>
    <property type="resolution" value="2.00 A"/>
    <property type="chains" value="A/B/C/D=75-163"/>
</dbReference>
<dbReference type="PDB" id="1SWG">
    <property type="method" value="X-ray"/>
    <property type="resolution" value="1.80 A"/>
    <property type="chains" value="A/B/C/D=75-178"/>
</dbReference>
<dbReference type="PDB" id="1SWH">
    <property type="method" value="X-ray"/>
    <property type="resolution" value="1.70 A"/>
    <property type="chains" value="A/B/C/D=37-163"/>
</dbReference>
<dbReference type="PDB" id="1SWJ">
    <property type="method" value="X-ray"/>
    <property type="resolution" value="2.00 A"/>
    <property type="chains" value="A/B/C/D=37-163"/>
</dbReference>
<dbReference type="PDB" id="1SWK">
    <property type="method" value="X-ray"/>
    <property type="resolution" value="2.00 A"/>
    <property type="chains" value="A/B/C/D=37-163"/>
</dbReference>
<dbReference type="PDB" id="1SWL">
    <property type="method" value="X-ray"/>
    <property type="resolution" value="1.80 A"/>
    <property type="chains" value="A/B/C/D=37-163"/>
</dbReference>
<dbReference type="PDB" id="1SWN">
    <property type="method" value="X-ray"/>
    <property type="resolution" value="2.20 A"/>
    <property type="chains" value="A/B/C/D=37-163"/>
</dbReference>
<dbReference type="PDB" id="1SWO">
    <property type="method" value="X-ray"/>
    <property type="resolution" value="1.95 A"/>
    <property type="chains" value="A/B/C/D=37-163"/>
</dbReference>
<dbReference type="PDB" id="1SWP">
    <property type="method" value="X-ray"/>
    <property type="resolution" value="2.00 A"/>
    <property type="chains" value="A/B/C/D=37-163"/>
</dbReference>
<dbReference type="PDB" id="1SWQ">
    <property type="method" value="X-ray"/>
    <property type="resolution" value="1.90 A"/>
    <property type="chains" value="A/B/C/D=37-163"/>
</dbReference>
<dbReference type="PDB" id="1SWR">
    <property type="method" value="X-ray"/>
    <property type="resolution" value="1.90 A"/>
    <property type="chains" value="A/B/C/D=37-163"/>
</dbReference>
<dbReference type="PDB" id="1SWS">
    <property type="method" value="X-ray"/>
    <property type="resolution" value="2.00 A"/>
    <property type="chains" value="A/B/C/D=37-163"/>
</dbReference>
<dbReference type="PDB" id="1SWT">
    <property type="method" value="X-ray"/>
    <property type="resolution" value="2.00 A"/>
    <property type="chains" value="A/B=37-163"/>
</dbReference>
<dbReference type="PDB" id="1SWU">
    <property type="method" value="X-ray"/>
    <property type="resolution" value="1.14 A"/>
    <property type="chains" value="A/B/C/D=37-163"/>
</dbReference>
<dbReference type="PDB" id="1VWA">
    <property type="method" value="X-ray"/>
    <property type="resolution" value="1.85 A"/>
    <property type="chains" value="B/D=37-159"/>
</dbReference>
<dbReference type="PDB" id="1VWB">
    <property type="method" value="X-ray"/>
    <property type="resolution" value="1.82 A"/>
    <property type="chains" value="B=37-159"/>
</dbReference>
<dbReference type="PDB" id="1VWC">
    <property type="method" value="X-ray"/>
    <property type="resolution" value="1.86 A"/>
    <property type="chains" value="B=37-159"/>
</dbReference>
<dbReference type="PDB" id="1VWD">
    <property type="method" value="X-ray"/>
    <property type="resolution" value="1.87 A"/>
    <property type="chains" value="B=37-159"/>
</dbReference>
<dbReference type="PDB" id="1VWE">
    <property type="method" value="X-ray"/>
    <property type="resolution" value="1.50 A"/>
    <property type="chains" value="B=37-159"/>
</dbReference>
<dbReference type="PDB" id="1VWF">
    <property type="method" value="X-ray"/>
    <property type="resolution" value="1.92 A"/>
    <property type="chains" value="B=37-159"/>
</dbReference>
<dbReference type="PDB" id="1VWG">
    <property type="method" value="X-ray"/>
    <property type="resolution" value="1.46 A"/>
    <property type="chains" value="B=37-159"/>
</dbReference>
<dbReference type="PDB" id="1VWH">
    <property type="method" value="X-ray"/>
    <property type="resolution" value="1.48 A"/>
    <property type="chains" value="B=37-159"/>
</dbReference>
<dbReference type="PDB" id="1VWI">
    <property type="method" value="X-ray"/>
    <property type="resolution" value="1.50 A"/>
    <property type="chains" value="B/D=37-159"/>
</dbReference>
<dbReference type="PDB" id="1VWJ">
    <property type="method" value="X-ray"/>
    <property type="resolution" value="1.45 A"/>
    <property type="chains" value="B/D=37-159"/>
</dbReference>
<dbReference type="PDB" id="1VWK">
    <property type="method" value="X-ray"/>
    <property type="resolution" value="1.45 A"/>
    <property type="chains" value="B/D=37-159"/>
</dbReference>
<dbReference type="PDB" id="1VWL">
    <property type="method" value="X-ray"/>
    <property type="resolution" value="1.45 A"/>
    <property type="chains" value="B/D=37-159"/>
</dbReference>
<dbReference type="PDB" id="1VWM">
    <property type="method" value="X-ray"/>
    <property type="resolution" value="1.60 A"/>
    <property type="chains" value="B=37-159"/>
</dbReference>
<dbReference type="PDB" id="1VWN">
    <property type="method" value="X-ray"/>
    <property type="resolution" value="1.85 A"/>
    <property type="chains" value="B=37-159"/>
</dbReference>
<dbReference type="PDB" id="1VWO">
    <property type="method" value="X-ray"/>
    <property type="resolution" value="1.65 A"/>
    <property type="chains" value="B=37-159"/>
</dbReference>
<dbReference type="PDB" id="1VWP">
    <property type="method" value="X-ray"/>
    <property type="resolution" value="1.75 A"/>
    <property type="chains" value="B=37-159"/>
</dbReference>
<dbReference type="PDB" id="1VWQ">
    <property type="method" value="X-ray"/>
    <property type="resolution" value="1.70 A"/>
    <property type="chains" value="B=37-159"/>
</dbReference>
<dbReference type="PDB" id="1VWR">
    <property type="method" value="X-ray"/>
    <property type="resolution" value="1.50 A"/>
    <property type="chains" value="B=37-159"/>
</dbReference>
<dbReference type="PDB" id="2BC3">
    <property type="method" value="X-ray"/>
    <property type="resolution" value="1.54 A"/>
    <property type="chains" value="A/B=38-183"/>
</dbReference>
<dbReference type="PDB" id="2F01">
    <property type="method" value="X-ray"/>
    <property type="resolution" value="0.85 A"/>
    <property type="chains" value="A/B=37-163"/>
</dbReference>
<dbReference type="PDB" id="2G5L">
    <property type="method" value="X-ray"/>
    <property type="resolution" value="1.15 A"/>
    <property type="chains" value="A/B=37-163"/>
</dbReference>
<dbReference type="PDB" id="2GH7">
    <property type="method" value="X-ray"/>
    <property type="resolution" value="1.00 A"/>
    <property type="chains" value="A/B=37-163"/>
</dbReference>
<dbReference type="PDB" id="2IZA">
    <property type="method" value="X-ray"/>
    <property type="resolution" value="1.46 A"/>
    <property type="chains" value="A=37-157"/>
</dbReference>
<dbReference type="PDB" id="2IZB">
    <property type="method" value="X-ray"/>
    <property type="resolution" value="1.20 A"/>
    <property type="chains" value="A=37-158"/>
</dbReference>
<dbReference type="PDB" id="2IZC">
    <property type="method" value="X-ray"/>
    <property type="resolution" value="1.40 A"/>
    <property type="chains" value="B/D=37-159"/>
</dbReference>
<dbReference type="PDB" id="2IZD">
    <property type="method" value="X-ray"/>
    <property type="resolution" value="1.60 A"/>
    <property type="chains" value="B/D=37-159"/>
</dbReference>
<dbReference type="PDB" id="2IZE">
    <property type="method" value="X-ray"/>
    <property type="resolution" value="1.57 A"/>
    <property type="chains" value="B/D=37-159"/>
</dbReference>
<dbReference type="PDB" id="2IZF">
    <property type="method" value="X-ray"/>
    <property type="resolution" value="1.58 A"/>
    <property type="chains" value="B/D=37-159"/>
</dbReference>
<dbReference type="PDB" id="2IZG">
    <property type="method" value="X-ray"/>
    <property type="resolution" value="1.36 A"/>
    <property type="chains" value="B/D=37-159"/>
</dbReference>
<dbReference type="PDB" id="2IZH">
    <property type="method" value="X-ray"/>
    <property type="resolution" value="1.36 A"/>
    <property type="chains" value="B/D=37-159"/>
</dbReference>
<dbReference type="PDB" id="2IZI">
    <property type="method" value="X-ray"/>
    <property type="resolution" value="1.50 A"/>
    <property type="chains" value="A=37-159"/>
</dbReference>
<dbReference type="PDB" id="2IZJ">
    <property type="method" value="X-ray"/>
    <property type="resolution" value="1.30 A"/>
    <property type="chains" value="A=37-159"/>
</dbReference>
<dbReference type="PDB" id="2IZK">
    <property type="method" value="X-ray"/>
    <property type="resolution" value="1.30 A"/>
    <property type="chains" value="A=37-159"/>
</dbReference>
<dbReference type="PDB" id="2IZL">
    <property type="method" value="X-ray"/>
    <property type="resolution" value="1.48 A"/>
    <property type="chains" value="B/D=37-159"/>
</dbReference>
<dbReference type="PDB" id="2QCB">
    <property type="method" value="X-ray"/>
    <property type="resolution" value="1.65 A"/>
    <property type="chains" value="A=38-183"/>
</dbReference>
<dbReference type="PDB" id="2RTA">
    <property type="method" value="X-ray"/>
    <property type="resolution" value="1.39 A"/>
    <property type="chains" value="A=25-159"/>
</dbReference>
<dbReference type="PDB" id="2RTB">
    <property type="method" value="X-ray"/>
    <property type="resolution" value="1.50 A"/>
    <property type="chains" value="B/D=25-159"/>
</dbReference>
<dbReference type="PDB" id="2RTC">
    <property type="method" value="X-ray"/>
    <property type="resolution" value="1.50 A"/>
    <property type="chains" value="B/D=25-159"/>
</dbReference>
<dbReference type="PDB" id="2RTD">
    <property type="method" value="X-ray"/>
    <property type="resolution" value="1.65 A"/>
    <property type="chains" value="B/D=25-159"/>
</dbReference>
<dbReference type="PDB" id="2RTE">
    <property type="method" value="X-ray"/>
    <property type="resolution" value="1.50 A"/>
    <property type="chains" value="B/D=25-159"/>
</dbReference>
<dbReference type="PDB" id="2RTF">
    <property type="method" value="X-ray"/>
    <property type="resolution" value="1.47 A"/>
    <property type="chains" value="B/D=25-159"/>
</dbReference>
<dbReference type="PDB" id="2RTG">
    <property type="method" value="X-ray"/>
    <property type="resolution" value="1.39 A"/>
    <property type="chains" value="B/D=25-159"/>
</dbReference>
<dbReference type="PDB" id="2RTH">
    <property type="method" value="X-ray"/>
    <property type="resolution" value="1.56 A"/>
    <property type="chains" value="B/D=25-159"/>
</dbReference>
<dbReference type="PDB" id="2RTI">
    <property type="method" value="X-ray"/>
    <property type="resolution" value="1.40 A"/>
    <property type="chains" value="B/D=25-159"/>
</dbReference>
<dbReference type="PDB" id="2RTJ">
    <property type="method" value="X-ray"/>
    <property type="resolution" value="1.40 A"/>
    <property type="chains" value="A=25-159"/>
</dbReference>
<dbReference type="PDB" id="2RTK">
    <property type="method" value="X-ray"/>
    <property type="resolution" value="1.82 A"/>
    <property type="chains" value="A=25-159"/>
</dbReference>
<dbReference type="PDB" id="2RTL">
    <property type="method" value="X-ray"/>
    <property type="resolution" value="1.41 A"/>
    <property type="chains" value="A=25-159"/>
</dbReference>
<dbReference type="PDB" id="2RTM">
    <property type="method" value="X-ray"/>
    <property type="resolution" value="1.30 A"/>
    <property type="chains" value="A=25-159"/>
</dbReference>
<dbReference type="PDB" id="2RTN">
    <property type="method" value="X-ray"/>
    <property type="resolution" value="1.80 A"/>
    <property type="chains" value="B/D=25-159"/>
</dbReference>
<dbReference type="PDB" id="2RTO">
    <property type="method" value="X-ray"/>
    <property type="resolution" value="1.58 A"/>
    <property type="chains" value="B/D=25-159"/>
</dbReference>
<dbReference type="PDB" id="2RTP">
    <property type="method" value="X-ray"/>
    <property type="resolution" value="1.50 A"/>
    <property type="chains" value="B/D=25-159"/>
</dbReference>
<dbReference type="PDB" id="2RTQ">
    <property type="method" value="X-ray"/>
    <property type="resolution" value="1.39 A"/>
    <property type="chains" value="B/D=25-159"/>
</dbReference>
<dbReference type="PDB" id="2RTR">
    <property type="method" value="X-ray"/>
    <property type="resolution" value="1.62 A"/>
    <property type="chains" value="B/D=25-159"/>
</dbReference>
<dbReference type="PDB" id="2WPU">
    <property type="method" value="X-ray"/>
    <property type="resolution" value="1.92 A"/>
    <property type="chains" value="A=38-183"/>
</dbReference>
<dbReference type="PDB" id="2Y3E">
    <property type="method" value="X-ray"/>
    <property type="resolution" value="1.45 A"/>
    <property type="chains" value="A/B=37-163"/>
</dbReference>
<dbReference type="PDB" id="2Y3F">
    <property type="method" value="X-ray"/>
    <property type="resolution" value="1.49 A"/>
    <property type="chains" value="A=37-163"/>
</dbReference>
<dbReference type="PDB" id="3MG5">
    <property type="method" value="X-ray"/>
    <property type="resolution" value="1.30 A"/>
    <property type="chains" value="A/B/C/D=37-163"/>
</dbReference>
<dbReference type="PDB" id="3PK2">
    <property type="method" value="X-ray"/>
    <property type="resolution" value="1.90 A"/>
    <property type="chains" value="A=38-183"/>
</dbReference>
<dbReference type="PDB" id="3RDM">
    <property type="method" value="X-ray"/>
    <property type="resolution" value="1.60 A"/>
    <property type="chains" value="A=37-164"/>
</dbReference>
<dbReference type="PDB" id="3RDO">
    <property type="method" value="X-ray"/>
    <property type="resolution" value="1.40 A"/>
    <property type="chains" value="A=37-164"/>
</dbReference>
<dbReference type="PDB" id="3RDQ">
    <property type="method" value="X-ray"/>
    <property type="resolution" value="1.60 A"/>
    <property type="chains" value="A=37-164"/>
</dbReference>
<dbReference type="PDB" id="3RDS">
    <property type="method" value="X-ray"/>
    <property type="resolution" value="1.50 A"/>
    <property type="chains" value="A=37-164"/>
</dbReference>
<dbReference type="PDB" id="3RDU">
    <property type="method" value="X-ray"/>
    <property type="resolution" value="1.50 A"/>
    <property type="chains" value="A=37-164"/>
</dbReference>
<dbReference type="PDB" id="3RDX">
    <property type="method" value="X-ray"/>
    <property type="resolution" value="2.10 A"/>
    <property type="chains" value="A/B=37-164"/>
</dbReference>
<dbReference type="PDB" id="3RE5">
    <property type="method" value="X-ray"/>
    <property type="resolution" value="1.95 A"/>
    <property type="chains" value="A=37-164"/>
</dbReference>
<dbReference type="PDB" id="3RE6">
    <property type="method" value="X-ray"/>
    <property type="resolution" value="1.82 A"/>
    <property type="chains" value="A=37-164"/>
</dbReference>
<dbReference type="PDB" id="3RY1">
    <property type="method" value="X-ray"/>
    <property type="resolution" value="1.03 A"/>
    <property type="chains" value="A/B/C/D=37-163"/>
</dbReference>
<dbReference type="PDB" id="3RY2">
    <property type="method" value="X-ray"/>
    <property type="resolution" value="0.95 A"/>
    <property type="chains" value="A/B=37-163"/>
</dbReference>
<dbReference type="PDB" id="3T6F">
    <property type="method" value="X-ray"/>
    <property type="resolution" value="1.22 A"/>
    <property type="chains" value="A/B=37-163"/>
</dbReference>
<dbReference type="PDB" id="3T6L">
    <property type="method" value="X-ray"/>
    <property type="resolution" value="1.30 A"/>
    <property type="chains" value="A=37-163"/>
</dbReference>
<dbReference type="PDB" id="3WYP">
    <property type="method" value="X-ray"/>
    <property type="resolution" value="1.30 A"/>
    <property type="chains" value="A/B/C/D=37-163"/>
</dbReference>
<dbReference type="PDB" id="3WYQ">
    <property type="method" value="X-ray"/>
    <property type="resolution" value="1.00 A"/>
    <property type="chains" value="A/B=37-163"/>
</dbReference>
<dbReference type="PDB" id="3WZN">
    <property type="method" value="X-ray"/>
    <property type="resolution" value="1.30 A"/>
    <property type="chains" value="A/B=37-163"/>
</dbReference>
<dbReference type="PDB" id="3WZO">
    <property type="method" value="X-ray"/>
    <property type="resolution" value="1.50 A"/>
    <property type="chains" value="A/B/C/D=37-163"/>
</dbReference>
<dbReference type="PDB" id="3WZP">
    <property type="method" value="X-ray"/>
    <property type="resolution" value="1.20 A"/>
    <property type="chains" value="A/B/C/D=37-163"/>
</dbReference>
<dbReference type="PDB" id="3WZQ">
    <property type="method" value="X-ray"/>
    <property type="resolution" value="1.70 A"/>
    <property type="chains" value="A/B/C/D=37-163"/>
</dbReference>
<dbReference type="PDB" id="3X00">
    <property type="method" value="X-ray"/>
    <property type="resolution" value="1.30 A"/>
    <property type="chains" value="A/B/C/D=37-163"/>
</dbReference>
<dbReference type="PDB" id="4BX5">
    <property type="method" value="X-ray"/>
    <property type="resolution" value="1.43 A"/>
    <property type="chains" value="A/C=37-72, B/D=37-163"/>
</dbReference>
<dbReference type="PDB" id="4BX6">
    <property type="method" value="X-ray"/>
    <property type="resolution" value="1.60 A"/>
    <property type="chains" value="A/B/C/D=37-163"/>
</dbReference>
<dbReference type="PDB" id="4BX7">
    <property type="method" value="X-ray"/>
    <property type="resolution" value="2.26 A"/>
    <property type="chains" value="A/B=37-163"/>
</dbReference>
<dbReference type="PDB" id="4CPE">
    <property type="method" value="X-ray"/>
    <property type="resolution" value="1.06 A"/>
    <property type="chains" value="A/B=37-163"/>
</dbReference>
<dbReference type="PDB" id="4CPF">
    <property type="method" value="X-ray"/>
    <property type="resolution" value="1.14 A"/>
    <property type="chains" value="A/B=37-163"/>
</dbReference>
<dbReference type="PDB" id="4CPH">
    <property type="method" value="X-ray"/>
    <property type="resolution" value="1.64 A"/>
    <property type="chains" value="A/B/C/D=37-163"/>
</dbReference>
<dbReference type="PDB" id="4CPI">
    <property type="method" value="X-ray"/>
    <property type="resolution" value="1.54 A"/>
    <property type="chains" value="A/B/C/D=37-163"/>
</dbReference>
<dbReference type="PDB" id="4DNE">
    <property type="method" value="X-ray"/>
    <property type="resolution" value="1.88 A"/>
    <property type="chains" value="A/B=1-183"/>
</dbReference>
<dbReference type="PDB" id="4EKV">
    <property type="method" value="X-ray"/>
    <property type="resolution" value="2.00 A"/>
    <property type="chains" value="A=25-183"/>
</dbReference>
<dbReference type="PDB" id="4GD9">
    <property type="method" value="X-ray"/>
    <property type="resolution" value="1.50 A"/>
    <property type="chains" value="A/B/C/D=37-163"/>
</dbReference>
<dbReference type="PDB" id="4GDA">
    <property type="method" value="X-ray"/>
    <property type="resolution" value="1.00 A"/>
    <property type="chains" value="A/B=37-163"/>
</dbReference>
<dbReference type="PDB" id="4GJS">
    <property type="method" value="X-ray"/>
    <property type="resolution" value="1.85 A"/>
    <property type="chains" value="A/B=38-183"/>
</dbReference>
<dbReference type="PDB" id="4GJV">
    <property type="method" value="X-ray"/>
    <property type="resolution" value="2.40 A"/>
    <property type="chains" value="A=38-183"/>
</dbReference>
<dbReference type="PDB" id="4IRW">
    <property type="method" value="X-ray"/>
    <property type="resolution" value="1.40 A"/>
    <property type="chains" value="A=36-163"/>
</dbReference>
<dbReference type="PDB" id="4JO6">
    <property type="method" value="X-ray"/>
    <property type="resolution" value="1.75 A"/>
    <property type="chains" value="A/B/C/D=25-183"/>
</dbReference>
<dbReference type="PDB" id="4OKA">
    <property type="method" value="X-ray"/>
    <property type="resolution" value="2.50 A"/>
    <property type="chains" value="A=38-183"/>
</dbReference>
<dbReference type="PDB" id="4Y59">
    <property type="method" value="X-ray"/>
    <property type="resolution" value="1.22 A"/>
    <property type="chains" value="A/B/C/D=39-159"/>
</dbReference>
<dbReference type="PDB" id="4Y5D">
    <property type="method" value="X-ray"/>
    <property type="resolution" value="1.20 A"/>
    <property type="chains" value="A/B/C/D=39-160"/>
</dbReference>
<dbReference type="PDB" id="4YVB">
    <property type="method" value="X-ray"/>
    <property type="resolution" value="1.35 A"/>
    <property type="chains" value="A/B/C/D=40-159"/>
</dbReference>
<dbReference type="PDB" id="5B5F">
    <property type="method" value="X-ray"/>
    <property type="resolution" value="1.20 A"/>
    <property type="chains" value="A/B/C/D=40-159"/>
</dbReference>
<dbReference type="PDB" id="5B5G">
    <property type="method" value="X-ray"/>
    <property type="resolution" value="1.50 A"/>
    <property type="chains" value="A/B/C/D=40-159"/>
</dbReference>
<dbReference type="PDB" id="5CSE">
    <property type="method" value="X-ray"/>
    <property type="resolution" value="1.79 A"/>
    <property type="chains" value="A/B=38-158"/>
</dbReference>
<dbReference type="PDB" id="5F2B">
    <property type="method" value="X-ray"/>
    <property type="resolution" value="1.70 A"/>
    <property type="chains" value="A=38-183"/>
</dbReference>
<dbReference type="PDB" id="5JD2">
    <property type="method" value="X-ray"/>
    <property type="resolution" value="1.90 A"/>
    <property type="chains" value="A/B/C/D=40-159"/>
</dbReference>
<dbReference type="PDB" id="5K67">
    <property type="method" value="X-ray"/>
    <property type="resolution" value="1.70 A"/>
    <property type="chains" value="A=38-183"/>
</dbReference>
<dbReference type="PDB" id="5K68">
    <property type="method" value="X-ray"/>
    <property type="resolution" value="1.40 A"/>
    <property type="chains" value="A=38-183"/>
</dbReference>
<dbReference type="PDB" id="5L3Y">
    <property type="method" value="X-ray"/>
    <property type="resolution" value="1.70 A"/>
    <property type="chains" value="A=38-183"/>
</dbReference>
<dbReference type="PDB" id="5N7X">
    <property type="method" value="X-ray"/>
    <property type="resolution" value="1.12 A"/>
    <property type="chains" value="A/B/E/F/H/K/M/O=1-183"/>
</dbReference>
<dbReference type="PDB" id="5N89">
    <property type="method" value="X-ray"/>
    <property type="resolution" value="1.27 A"/>
    <property type="chains" value="A/B/D/F/H/K/M/O=1-183"/>
</dbReference>
<dbReference type="PDB" id="5N8B">
    <property type="method" value="X-ray"/>
    <property type="resolution" value="1.03 A"/>
    <property type="chains" value="A/B/D/G=1-183"/>
</dbReference>
<dbReference type="PDB" id="5N8E">
    <property type="method" value="X-ray"/>
    <property type="resolution" value="1.10 A"/>
    <property type="chains" value="A/B/C/D=1-183"/>
</dbReference>
<dbReference type="PDB" id="5N8J">
    <property type="method" value="X-ray"/>
    <property type="resolution" value="1.05 A"/>
    <property type="chains" value="A/B/C/D=1-183"/>
</dbReference>
<dbReference type="PDB" id="5N8T">
    <property type="method" value="X-ray"/>
    <property type="resolution" value="1.61 A"/>
    <property type="chains" value="A=1-183"/>
</dbReference>
<dbReference type="PDB" id="5N8W">
    <property type="method" value="X-ray"/>
    <property type="resolution" value="1.10 A"/>
    <property type="chains" value="A/B=1-183"/>
</dbReference>
<dbReference type="PDB" id="5N99">
    <property type="method" value="X-ray"/>
    <property type="resolution" value="1.50 A"/>
    <property type="chains" value="A/B/D/G/I/K/M/O/Q/S/U/Y=1-183"/>
</dbReference>
<dbReference type="PDB" id="5TO2">
    <property type="method" value="X-ray"/>
    <property type="resolution" value="1.65 A"/>
    <property type="chains" value="A/B/C=39-163, D=39-162"/>
</dbReference>
<dbReference type="PDB" id="5VCQ">
    <property type="method" value="X-ray"/>
    <property type="resolution" value="2.05 A"/>
    <property type="chains" value="A/B/C/D=1-183"/>
</dbReference>
<dbReference type="PDB" id="5VKX">
    <property type="method" value="X-ray"/>
    <property type="resolution" value="1.37 A"/>
    <property type="chains" value="A=38-183"/>
</dbReference>
<dbReference type="PDB" id="5VL5">
    <property type="method" value="X-ray"/>
    <property type="resolution" value="1.46 A"/>
    <property type="chains" value="A=38-183"/>
</dbReference>
<dbReference type="PDB" id="5VL8">
    <property type="method" value="X-ray"/>
    <property type="resolution" value="1.70 A"/>
    <property type="chains" value="A=38-183"/>
</dbReference>
<dbReference type="PDB" id="5WBA">
    <property type="method" value="X-ray"/>
    <property type="resolution" value="1.50 A"/>
    <property type="chains" value="A=38-183"/>
</dbReference>
<dbReference type="PDB" id="5WBB">
    <property type="method" value="X-ray"/>
    <property type="resolution" value="1.50 A"/>
    <property type="chains" value="A=38-183"/>
</dbReference>
<dbReference type="PDB" id="5WBC">
    <property type="method" value="X-ray"/>
    <property type="resolution" value="1.72 A"/>
    <property type="chains" value="A=38-183"/>
</dbReference>
<dbReference type="PDB" id="5WBD">
    <property type="method" value="X-ray"/>
    <property type="resolution" value="1.50 A"/>
    <property type="chains" value="A=38-183"/>
</dbReference>
<dbReference type="PDB" id="6ANX">
    <property type="method" value="X-ray"/>
    <property type="resolution" value="1.62 A"/>
    <property type="chains" value="A=38-183"/>
</dbReference>
<dbReference type="PDB" id="6AUC">
    <property type="method" value="X-ray"/>
    <property type="resolution" value="1.46 A"/>
    <property type="chains" value="A=38-183"/>
</dbReference>
<dbReference type="PDB" id="6AUE">
    <property type="method" value="X-ray"/>
    <property type="resolution" value="1.36 A"/>
    <property type="chains" value="A=38-183"/>
</dbReference>
<dbReference type="PDB" id="6AUH">
    <property type="method" value="X-ray"/>
    <property type="resolution" value="1.60 A"/>
    <property type="chains" value="A=38-183"/>
</dbReference>
<dbReference type="PDB" id="6AUL">
    <property type="method" value="X-ray"/>
    <property type="resolution" value="1.36 A"/>
    <property type="chains" value="A=38-183"/>
</dbReference>
<dbReference type="PDB" id="6AUO">
    <property type="method" value="X-ray"/>
    <property type="resolution" value="1.70 A"/>
    <property type="chains" value="A=38-183"/>
</dbReference>
<dbReference type="PDB" id="6AVK">
    <property type="method" value="X-ray"/>
    <property type="resolution" value="1.40 A"/>
    <property type="chains" value="A/B=37-159"/>
</dbReference>
<dbReference type="PDB" id="6ESS">
    <property type="method" value="X-ray"/>
    <property type="resolution" value="1.91 A"/>
    <property type="chains" value="A=38-183"/>
</dbReference>
<dbReference type="PDB" id="6ESU">
    <property type="method" value="X-ray"/>
    <property type="resolution" value="1.78 A"/>
    <property type="chains" value="A=38-183"/>
</dbReference>
<dbReference type="PDB" id="6FH8">
    <property type="method" value="X-ray"/>
    <property type="resolution" value="1.64 A"/>
    <property type="chains" value="A=38-183"/>
</dbReference>
<dbReference type="PDB" id="6FRY">
    <property type="method" value="X-ray"/>
    <property type="resolution" value="1.70 A"/>
    <property type="chains" value="A=38-183"/>
</dbReference>
<dbReference type="PDB" id="6GH7">
    <property type="method" value="X-ray"/>
    <property type="resolution" value="1.08 A"/>
    <property type="chains" value="A/B/C/D=37-163"/>
</dbReference>
<dbReference type="PDB" id="6J6J">
    <property type="method" value="EM"/>
    <property type="resolution" value="3.20 A"/>
    <property type="chains" value="A/B/C/D=40-158"/>
</dbReference>
<dbReference type="PDB" id="6J6K">
    <property type="method" value="EM"/>
    <property type="resolution" value="3.30 A"/>
    <property type="chains" value="A/B/C/D=40-158"/>
</dbReference>
<dbReference type="PDB" id="6LNG">
    <property type="method" value="X-ray"/>
    <property type="resolution" value="1.80 A"/>
    <property type="chains" value="A/B/C/D/E/F=39-163"/>
</dbReference>
<dbReference type="PDB" id="6M9B">
    <property type="method" value="X-ray"/>
    <property type="resolution" value="1.55 A"/>
    <property type="chains" value="A/B/C/D=37-163"/>
</dbReference>
<dbReference type="PDB" id="6QBB">
    <property type="method" value="X-ray"/>
    <property type="resolution" value="1.52 A"/>
    <property type="chains" value="A/B=38-163"/>
</dbReference>
<dbReference type="PDB" id="6QSY">
    <property type="method" value="X-ray"/>
    <property type="resolution" value="1.70 A"/>
    <property type="chains" value="A=38-163"/>
</dbReference>
<dbReference type="PDB" id="6QW4">
    <property type="method" value="X-ray"/>
    <property type="resolution" value="2.10 A"/>
    <property type="chains" value="A=38-163"/>
</dbReference>
<dbReference type="PDB" id="6S4Q">
    <property type="method" value="X-ray"/>
    <property type="resolution" value="1.85 A"/>
    <property type="chains" value="A/B=39-183"/>
</dbReference>
<dbReference type="PDB" id="6S50">
    <property type="method" value="X-ray"/>
    <property type="resolution" value="2.00 A"/>
    <property type="chains" value="A/B=39-183"/>
</dbReference>
<dbReference type="PDB" id="6SOK">
    <property type="method" value="X-ray"/>
    <property type="resolution" value="1.96 A"/>
    <property type="chains" value="A/B/C/D=38-163"/>
</dbReference>
<dbReference type="PDB" id="6SOS">
    <property type="method" value="X-ray"/>
    <property type="resolution" value="2.20 A"/>
    <property type="chains" value="A/B/C/D=38-163"/>
</dbReference>
<dbReference type="PDB" id="6T1E">
    <property type="method" value="X-ray"/>
    <property type="resolution" value="1.30 A"/>
    <property type="chains" value="A=38-183"/>
</dbReference>
<dbReference type="PDB" id="6T1G">
    <property type="method" value="X-ray"/>
    <property type="resolution" value="1.90 A"/>
    <property type="chains" value="A/B=38-183"/>
</dbReference>
<dbReference type="PDB" id="6T1K">
    <property type="method" value="X-ray"/>
    <property type="resolution" value="1.20 A"/>
    <property type="chains" value="A=38-183"/>
</dbReference>
<dbReference type="PDB" id="6T2L">
    <property type="method" value="X-ray"/>
    <property type="resolution" value="1.00 A"/>
    <property type="chains" value="A=38-183"/>
</dbReference>
<dbReference type="PDB" id="6T2Y">
    <property type="method" value="X-ray"/>
    <property type="resolution" value="1.80 A"/>
    <property type="chains" value="A/B=38-183"/>
</dbReference>
<dbReference type="PDB" id="6T2Z">
    <property type="method" value="X-ray"/>
    <property type="resolution" value="1.35 A"/>
    <property type="chains" value="A/B=38-183"/>
</dbReference>
<dbReference type="PDB" id="6T30">
    <property type="method" value="X-ray"/>
    <property type="resolution" value="1.80 A"/>
    <property type="chains" value="A/B=38-183"/>
</dbReference>
<dbReference type="PDB" id="6T31">
    <property type="method" value="X-ray"/>
    <property type="resolution" value="1.35 A"/>
    <property type="chains" value="A/B=38-183"/>
</dbReference>
<dbReference type="PDB" id="6T32">
    <property type="method" value="X-ray"/>
    <property type="resolution" value="1.75 A"/>
    <property type="chains" value="A/B=38-183"/>
</dbReference>
<dbReference type="PDB" id="6TIP">
    <property type="method" value="X-ray"/>
    <property type="resolution" value="2.10 A"/>
    <property type="chains" value="A/B=38-163"/>
</dbReference>
<dbReference type="PDB" id="6UC3">
    <property type="method" value="X-ray"/>
    <property type="resolution" value="1.84 A"/>
    <property type="chains" value="A/B=37-163"/>
</dbReference>
<dbReference type="PDB" id="6UD1">
    <property type="method" value="X-ray"/>
    <property type="resolution" value="1.55 A"/>
    <property type="chains" value="A/B=37-163"/>
</dbReference>
<dbReference type="PDB" id="6UD6">
    <property type="method" value="X-ray"/>
    <property type="resolution" value="1.50 A"/>
    <property type="chains" value="A/B=37-163"/>
</dbReference>
<dbReference type="PDB" id="6UDB">
    <property type="method" value="X-ray"/>
    <property type="resolution" value="1.55 A"/>
    <property type="chains" value="A/B/C/D=37-163"/>
</dbReference>
<dbReference type="PDB" id="6UDC">
    <property type="method" value="X-ray"/>
    <property type="resolution" value="2.10 A"/>
    <property type="chains" value="A/B/C/D=37-163"/>
</dbReference>
<dbReference type="PDB" id="6UI0">
    <property type="method" value="X-ray"/>
    <property type="resolution" value="1.40 A"/>
    <property type="chains" value="A=38-183"/>
</dbReference>
<dbReference type="PDB" id="6UIU">
    <property type="method" value="X-ray"/>
    <property type="resolution" value="1.35 A"/>
    <property type="chains" value="A=38-183"/>
</dbReference>
<dbReference type="PDB" id="6UIY">
    <property type="method" value="X-ray"/>
    <property type="resolution" value="1.47 A"/>
    <property type="chains" value="A=38-183"/>
</dbReference>
<dbReference type="PDB" id="6UIZ">
    <property type="method" value="X-ray"/>
    <property type="resolution" value="1.85 A"/>
    <property type="chains" value="A=38-183"/>
</dbReference>
<dbReference type="PDB" id="6US6">
    <property type="method" value="X-ray"/>
    <property type="resolution" value="1.50 A"/>
    <property type="chains" value="A=38-183"/>
</dbReference>
<dbReference type="PDB" id="6VJK">
    <property type="method" value="X-ray"/>
    <property type="resolution" value="1.60 A"/>
    <property type="chains" value="A/B/C/D/E/F/G/H/I/J/K/L=38-160"/>
</dbReference>
<dbReference type="PDB" id="6VJL">
    <property type="method" value="X-ray"/>
    <property type="resolution" value="1.30 A"/>
    <property type="chains" value="A=25-183"/>
</dbReference>
<dbReference type="PDB" id="6VO9">
    <property type="method" value="X-ray"/>
    <property type="resolution" value="1.50 A"/>
    <property type="chains" value="A=38-183"/>
</dbReference>
<dbReference type="PDB" id="6VOB">
    <property type="method" value="X-ray"/>
    <property type="resolution" value="1.70 A"/>
    <property type="chains" value="A=38-183"/>
</dbReference>
<dbReference type="PDB" id="6VOZ">
    <property type="method" value="X-ray"/>
    <property type="resolution" value="1.30 A"/>
    <property type="chains" value="A=38-183"/>
</dbReference>
<dbReference type="PDB" id="6VP1">
    <property type="method" value="X-ray"/>
    <property type="resolution" value="1.45 A"/>
    <property type="chains" value="A/B/C/D=38-183"/>
</dbReference>
<dbReference type="PDB" id="6VP2">
    <property type="method" value="X-ray"/>
    <property type="resolution" value="1.80 A"/>
    <property type="chains" value="A/B/C/D=38-183"/>
</dbReference>
<dbReference type="PDB" id="6VP3">
    <property type="method" value="X-ray"/>
    <property type="resolution" value="1.65 A"/>
    <property type="chains" value="A/B/C/D=38-183"/>
</dbReference>
<dbReference type="PDB" id="6Y25">
    <property type="method" value="X-ray"/>
    <property type="resolution" value="1.95 A"/>
    <property type="chains" value="AAA=39-183"/>
</dbReference>
<dbReference type="PDB" id="6Y2M">
    <property type="method" value="X-ray"/>
    <property type="resolution" value="1.95 A"/>
    <property type="chains" value="AAA=39-183"/>
</dbReference>
<dbReference type="PDB" id="6Y2T">
    <property type="method" value="X-ray"/>
    <property type="resolution" value="1.55 A"/>
    <property type="chains" value="AAA=39-183"/>
</dbReference>
<dbReference type="PDB" id="6Y33">
    <property type="method" value="X-ray"/>
    <property type="resolution" value="1.49 A"/>
    <property type="chains" value="AAA=39-183"/>
</dbReference>
<dbReference type="PDB" id="6Y34">
    <property type="method" value="X-ray"/>
    <property type="resolution" value="1.31 A"/>
    <property type="chains" value="AAA=39-183"/>
</dbReference>
<dbReference type="PDB" id="6Y3Q">
    <property type="method" value="X-ray"/>
    <property type="resolution" value="1.95 A"/>
    <property type="chains" value="AAA=39-183"/>
</dbReference>
<dbReference type="PDB" id="7ALX">
    <property type="method" value="X-ray"/>
    <property type="resolution" value="1.80 A"/>
    <property type="chains" value="AAA/BBB=39-183"/>
</dbReference>
<dbReference type="PDB" id="7B74">
    <property type="method" value="X-ray"/>
    <property type="resolution" value="1.85 A"/>
    <property type="chains" value="AAA/BBB/CCC/DDD=39-183"/>
</dbReference>
<dbReference type="PDB" id="7DY0">
    <property type="method" value="EM"/>
    <property type="resolution" value="1.92 A"/>
    <property type="chains" value="A=1-183"/>
</dbReference>
<dbReference type="PDB" id="7EFC">
    <property type="method" value="EM"/>
    <property type="resolution" value="1.70 A"/>
    <property type="chains" value="A=1-183"/>
</dbReference>
<dbReference type="PDB" id="7EFD">
    <property type="method" value="EM"/>
    <property type="resolution" value="1.77 A"/>
    <property type="chains" value="A=1-183"/>
</dbReference>
<dbReference type="PDB" id="7EK8">
    <property type="method" value="X-ray"/>
    <property type="resolution" value="1.70 A"/>
    <property type="chains" value="A/B/C/D=38-160"/>
</dbReference>
<dbReference type="PDB" id="7EK9">
    <property type="method" value="X-ray"/>
    <property type="resolution" value="1.10 A"/>
    <property type="chains" value="A/B/C/D=38-160"/>
</dbReference>
<dbReference type="PDB" id="7KBY">
    <property type="method" value="X-ray"/>
    <property type="resolution" value="1.70 A"/>
    <property type="chains" value="A=38-183"/>
</dbReference>
<dbReference type="PDB" id="7KBZ">
    <property type="method" value="X-ray"/>
    <property type="resolution" value="1.90 A"/>
    <property type="chains" value="A/B/C/D=38-183"/>
</dbReference>
<dbReference type="PDB" id="7KNL">
    <property type="method" value="X-ray"/>
    <property type="resolution" value="1.35 A"/>
    <property type="chains" value="A=38-183"/>
</dbReference>
<dbReference type="PDB" id="7NLV">
    <property type="method" value="X-ray"/>
    <property type="resolution" value="1.29 A"/>
    <property type="chains" value="AAA/BBB/CCC/DDD=37-163"/>
</dbReference>
<dbReference type="PDB" id="7ZOF">
    <property type="method" value="X-ray"/>
    <property type="resolution" value="1.74 A"/>
    <property type="chains" value="A/B/C/D=38-183"/>
</dbReference>
<dbReference type="PDB" id="7ZX9">
    <property type="method" value="X-ray"/>
    <property type="resolution" value="1.55 A"/>
    <property type="chains" value="A=39-183"/>
</dbReference>
<dbReference type="PDB" id="7ZXZ">
    <property type="method" value="X-ray"/>
    <property type="resolution" value="1.45 A"/>
    <property type="chains" value="A/B=39-183"/>
</dbReference>
<dbReference type="PDB" id="8AQD">
    <property type="method" value="X-ray"/>
    <property type="resolution" value="1.45 A"/>
    <property type="chains" value="A=38-183"/>
</dbReference>
<dbReference type="PDB" id="8AQJ">
    <property type="method" value="X-ray"/>
    <property type="resolution" value="1.85 A"/>
    <property type="chains" value="A=38-183"/>
</dbReference>
<dbReference type="PDB" id="8AQO">
    <property type="method" value="X-ray"/>
    <property type="resolution" value="1.90 A"/>
    <property type="chains" value="A/B/C/D=38-183"/>
</dbReference>
<dbReference type="PDB" id="8AQX">
    <property type="method" value="X-ray"/>
    <property type="resolution" value="1.85 A"/>
    <property type="chains" value="A/B/C/D=38-183"/>
</dbReference>
<dbReference type="PDB" id="8AQY">
    <property type="method" value="X-ray"/>
    <property type="resolution" value="1.65 A"/>
    <property type="chains" value="A/B/C/D=38-183"/>
</dbReference>
<dbReference type="PDB" id="8BY0">
    <property type="method" value="X-ray"/>
    <property type="resolution" value="2.10 A"/>
    <property type="chains" value="A=38-183"/>
</dbReference>
<dbReference type="PDB" id="8BY1">
    <property type="method" value="X-ray"/>
    <property type="resolution" value="1.49 A"/>
    <property type="chains" value="A=39-158"/>
</dbReference>
<dbReference type="PDB" id="8CRN">
    <property type="method" value="X-ray"/>
    <property type="resolution" value="2.00 A"/>
    <property type="chains" value="A/B/C/D=39-183"/>
</dbReference>
<dbReference type="PDB" id="8CRP">
    <property type="method" value="X-ray"/>
    <property type="resolution" value="2.00 A"/>
    <property type="chains" value="A/B/C/D=39-183"/>
</dbReference>
<dbReference type="PDB" id="8GOG">
    <property type="method" value="X-ray"/>
    <property type="resolution" value="2.00 A"/>
    <property type="chains" value="A/B=39-157"/>
</dbReference>
<dbReference type="PDB" id="8GVK">
    <property type="method" value="EM"/>
    <property type="resolution" value="2.20 A"/>
    <property type="chains" value="A/B/C/D=1-183"/>
</dbReference>
<dbReference type="PDB" id="8HRM">
    <property type="method" value="EM"/>
    <property type="resolution" value="2.56 A"/>
    <property type="chains" value="A/B/C/D=40-158"/>
</dbReference>
<dbReference type="PDB" id="8OJW">
    <property type="method" value="X-ray"/>
    <property type="resolution" value="1.48 A"/>
    <property type="chains" value="A=38-159"/>
</dbReference>
<dbReference type="PDB" id="8OJX">
    <property type="method" value="X-ray"/>
    <property type="resolution" value="1.60 A"/>
    <property type="chains" value="A=38-158"/>
</dbReference>
<dbReference type="PDB" id="8P5Y">
    <property type="method" value="X-ray"/>
    <property type="resolution" value="1.88 A"/>
    <property type="chains" value="A/B/C/D=39-183"/>
</dbReference>
<dbReference type="PDB" id="8P5Z">
    <property type="method" value="X-ray"/>
    <property type="resolution" value="1.56 A"/>
    <property type="chains" value="A/B/C/D=38-183"/>
</dbReference>
<dbReference type="PDB" id="8PXG">
    <property type="method" value="X-ray"/>
    <property type="resolution" value="1.80 A"/>
    <property type="chains" value="A=38-163"/>
</dbReference>
<dbReference type="PDB" id="8QQ3">
    <property type="method" value="X-ray"/>
    <property type="resolution" value="1.60 A"/>
    <property type="chains" value="A/B/C/D=39-183"/>
</dbReference>
<dbReference type="PDB" id="8TY0">
    <property type="method" value="X-ray"/>
    <property type="resolution" value="1.54 A"/>
    <property type="chains" value="A/B/C/D=38-183"/>
</dbReference>
<dbReference type="PDB" id="8XG4">
    <property type="method" value="X-ray"/>
    <property type="resolution" value="1.38 A"/>
    <property type="chains" value="A/B/C/D=39-159"/>
</dbReference>
<dbReference type="PDB" id="8XG5">
    <property type="method" value="X-ray"/>
    <property type="resolution" value="1.40 A"/>
    <property type="chains" value="A/B/C/D=39-159"/>
</dbReference>
<dbReference type="PDB" id="8XG6">
    <property type="method" value="X-ray"/>
    <property type="resolution" value="1.31 A"/>
    <property type="chains" value="A/B/C/D=39-159"/>
</dbReference>
<dbReference type="PDB" id="8Y23">
    <property type="method" value="X-ray"/>
    <property type="resolution" value="1.48 A"/>
    <property type="chains" value="A/B/C/D=39-159"/>
</dbReference>
<dbReference type="PDB" id="8Y24">
    <property type="method" value="X-ray"/>
    <property type="resolution" value="1.45 A"/>
    <property type="chains" value="A/B/C/D=39-159"/>
</dbReference>
<dbReference type="PDB" id="8Y25">
    <property type="method" value="X-ray"/>
    <property type="resolution" value="1.45 A"/>
    <property type="chains" value="A/B/C/D=39-159"/>
</dbReference>
<dbReference type="PDB" id="8Y26">
    <property type="method" value="X-ray"/>
    <property type="resolution" value="1.23 A"/>
    <property type="chains" value="A/B/C/D=39-159"/>
</dbReference>
<dbReference type="PDB" id="8Y27">
    <property type="method" value="X-ray"/>
    <property type="resolution" value="1.45 A"/>
    <property type="chains" value="A/B/C/D=39-159"/>
</dbReference>
<dbReference type="PDB" id="8Y28">
    <property type="method" value="X-ray"/>
    <property type="resolution" value="1.33 A"/>
    <property type="chains" value="A/B/C/D=39-159"/>
</dbReference>
<dbReference type="PDB" id="8Y29">
    <property type="method" value="X-ray"/>
    <property type="resolution" value="1.42 A"/>
    <property type="chains" value="A/B/C/D=39-159"/>
</dbReference>
<dbReference type="PDB" id="8Y2A">
    <property type="method" value="X-ray"/>
    <property type="resolution" value="1.34 A"/>
    <property type="chains" value="A/B/C/D=39-159"/>
</dbReference>
<dbReference type="PDB" id="8Y2B">
    <property type="method" value="X-ray"/>
    <property type="resolution" value="1.50 A"/>
    <property type="chains" value="A/B/C/D=39-159"/>
</dbReference>
<dbReference type="PDB" id="9CST">
    <property type="method" value="X-ray"/>
    <property type="resolution" value="1.13 A"/>
    <property type="chains" value="A=38-183"/>
</dbReference>
<dbReference type="PDB" id="9CSU">
    <property type="method" value="X-ray"/>
    <property type="resolution" value="1.60 A"/>
    <property type="chains" value="A=38-183"/>
</dbReference>
<dbReference type="PDB" id="9CSV">
    <property type="method" value="X-ray"/>
    <property type="resolution" value="1.60 A"/>
    <property type="chains" value="A=38-183"/>
</dbReference>
<dbReference type="PDB" id="9CSW">
    <property type="method" value="X-ray"/>
    <property type="resolution" value="1.30 A"/>
    <property type="chains" value="A=38-183"/>
</dbReference>
<dbReference type="PDB" id="9E6Z">
    <property type="method" value="X-ray"/>
    <property type="resolution" value="1.70 A"/>
    <property type="chains" value="A=38-183"/>
</dbReference>
<dbReference type="PDB" id="9FFJ">
    <property type="method" value="X-ray"/>
    <property type="resolution" value="1.27 A"/>
    <property type="chains" value="A=39-183"/>
</dbReference>
<dbReference type="PDB" id="9FNR">
    <property type="method" value="X-ray"/>
    <property type="resolution" value="1.64 A"/>
    <property type="chains" value="A=39-183"/>
</dbReference>
<dbReference type="PDB" id="9FOA">
    <property type="method" value="X-ray"/>
    <property type="resolution" value="1.36 A"/>
    <property type="chains" value="D=39-183"/>
</dbReference>
<dbReference type="PDBsum" id="1DF8"/>
<dbReference type="PDBsum" id="1HQQ"/>
<dbReference type="PDBsum" id="1HXL"/>
<dbReference type="PDBsum" id="1HXZ"/>
<dbReference type="PDBsum" id="1HY2"/>
<dbReference type="PDBsum" id="1I9H"/>
<dbReference type="PDBsum" id="1KFF"/>
<dbReference type="PDBsum" id="1KL3"/>
<dbReference type="PDBsum" id="1KL4"/>
<dbReference type="PDBsum" id="1KL5"/>
<dbReference type="PDBsum" id="1LCV"/>
<dbReference type="PDBsum" id="1LCW"/>
<dbReference type="PDBsum" id="1LCZ"/>
<dbReference type="PDBsum" id="1LUQ"/>
<dbReference type="PDBsum" id="1MEP"/>
<dbReference type="PDBsum" id="1MK5"/>
<dbReference type="PDBsum" id="1MM9"/>
<dbReference type="PDBsum" id="1MOY"/>
<dbReference type="PDBsum" id="1N43"/>
<dbReference type="PDBsum" id="1N4J"/>
<dbReference type="PDBsum" id="1N7Y"/>
<dbReference type="PDBsum" id="1N9M"/>
<dbReference type="PDBsum" id="1N9Y"/>
<dbReference type="PDBsum" id="1NBX"/>
<dbReference type="PDBsum" id="1NC9"/>
<dbReference type="PDBsum" id="1NDJ"/>
<dbReference type="PDBsum" id="1NQM"/>
<dbReference type="PDBsum" id="1PTS"/>
<dbReference type="PDBsum" id="1RST"/>
<dbReference type="PDBsum" id="1RSU"/>
<dbReference type="PDBsum" id="1RXH"/>
<dbReference type="PDBsum" id="1RXJ"/>
<dbReference type="PDBsum" id="1RXK"/>
<dbReference type="PDBsum" id="1SLD"/>
<dbReference type="PDBsum" id="1SLE"/>
<dbReference type="PDBsum" id="1SLF"/>
<dbReference type="PDBsum" id="1SLG"/>
<dbReference type="PDBsum" id="1SRE"/>
<dbReference type="PDBsum" id="1SRF"/>
<dbReference type="PDBsum" id="1SRG"/>
<dbReference type="PDBsum" id="1SRH"/>
<dbReference type="PDBsum" id="1SRI"/>
<dbReference type="PDBsum" id="1SRJ"/>
<dbReference type="PDBsum" id="1STP"/>
<dbReference type="PDBsum" id="1STR"/>
<dbReference type="PDBsum" id="1STS"/>
<dbReference type="PDBsum" id="1SWA"/>
<dbReference type="PDBsum" id="1SWB"/>
<dbReference type="PDBsum" id="1SWC"/>
<dbReference type="PDBsum" id="1SWD"/>
<dbReference type="PDBsum" id="1SWE"/>
<dbReference type="PDBsum" id="1SWF"/>
<dbReference type="PDBsum" id="1SWG"/>
<dbReference type="PDBsum" id="1SWH"/>
<dbReference type="PDBsum" id="1SWJ"/>
<dbReference type="PDBsum" id="1SWK"/>
<dbReference type="PDBsum" id="1SWL"/>
<dbReference type="PDBsum" id="1SWN"/>
<dbReference type="PDBsum" id="1SWO"/>
<dbReference type="PDBsum" id="1SWP"/>
<dbReference type="PDBsum" id="1SWQ"/>
<dbReference type="PDBsum" id="1SWR"/>
<dbReference type="PDBsum" id="1SWS"/>
<dbReference type="PDBsum" id="1SWT"/>
<dbReference type="PDBsum" id="1SWU"/>
<dbReference type="PDBsum" id="1VWA"/>
<dbReference type="PDBsum" id="1VWB"/>
<dbReference type="PDBsum" id="1VWC"/>
<dbReference type="PDBsum" id="1VWD"/>
<dbReference type="PDBsum" id="1VWE"/>
<dbReference type="PDBsum" id="1VWF"/>
<dbReference type="PDBsum" id="1VWG"/>
<dbReference type="PDBsum" id="1VWH"/>
<dbReference type="PDBsum" id="1VWI"/>
<dbReference type="PDBsum" id="1VWJ"/>
<dbReference type="PDBsum" id="1VWK"/>
<dbReference type="PDBsum" id="1VWL"/>
<dbReference type="PDBsum" id="1VWM"/>
<dbReference type="PDBsum" id="1VWN"/>
<dbReference type="PDBsum" id="1VWO"/>
<dbReference type="PDBsum" id="1VWP"/>
<dbReference type="PDBsum" id="1VWQ"/>
<dbReference type="PDBsum" id="1VWR"/>
<dbReference type="PDBsum" id="2BC3"/>
<dbReference type="PDBsum" id="2F01"/>
<dbReference type="PDBsum" id="2G5L"/>
<dbReference type="PDBsum" id="2GH7"/>
<dbReference type="PDBsum" id="2IZA"/>
<dbReference type="PDBsum" id="2IZB"/>
<dbReference type="PDBsum" id="2IZC"/>
<dbReference type="PDBsum" id="2IZD"/>
<dbReference type="PDBsum" id="2IZE"/>
<dbReference type="PDBsum" id="2IZF"/>
<dbReference type="PDBsum" id="2IZG"/>
<dbReference type="PDBsum" id="2IZH"/>
<dbReference type="PDBsum" id="2IZI"/>
<dbReference type="PDBsum" id="2IZJ"/>
<dbReference type="PDBsum" id="2IZK"/>
<dbReference type="PDBsum" id="2IZL"/>
<dbReference type="PDBsum" id="2QCB"/>
<dbReference type="PDBsum" id="2RTA"/>
<dbReference type="PDBsum" id="2RTB"/>
<dbReference type="PDBsum" id="2RTC"/>
<dbReference type="PDBsum" id="2RTD"/>
<dbReference type="PDBsum" id="2RTE"/>
<dbReference type="PDBsum" id="2RTF"/>
<dbReference type="PDBsum" id="2RTG"/>
<dbReference type="PDBsum" id="2RTH"/>
<dbReference type="PDBsum" id="2RTI"/>
<dbReference type="PDBsum" id="2RTJ"/>
<dbReference type="PDBsum" id="2RTK"/>
<dbReference type="PDBsum" id="2RTL"/>
<dbReference type="PDBsum" id="2RTM"/>
<dbReference type="PDBsum" id="2RTN"/>
<dbReference type="PDBsum" id="2RTO"/>
<dbReference type="PDBsum" id="2RTP"/>
<dbReference type="PDBsum" id="2RTQ"/>
<dbReference type="PDBsum" id="2RTR"/>
<dbReference type="PDBsum" id="2WPU"/>
<dbReference type="PDBsum" id="2Y3E"/>
<dbReference type="PDBsum" id="2Y3F"/>
<dbReference type="PDBsum" id="3MG5"/>
<dbReference type="PDBsum" id="3PK2"/>
<dbReference type="PDBsum" id="3RDM"/>
<dbReference type="PDBsum" id="3RDO"/>
<dbReference type="PDBsum" id="3RDQ"/>
<dbReference type="PDBsum" id="3RDS"/>
<dbReference type="PDBsum" id="3RDU"/>
<dbReference type="PDBsum" id="3RDX"/>
<dbReference type="PDBsum" id="3RE5"/>
<dbReference type="PDBsum" id="3RE6"/>
<dbReference type="PDBsum" id="3RY1"/>
<dbReference type="PDBsum" id="3RY2"/>
<dbReference type="PDBsum" id="3T6F"/>
<dbReference type="PDBsum" id="3T6L"/>
<dbReference type="PDBsum" id="3WYP"/>
<dbReference type="PDBsum" id="3WYQ"/>
<dbReference type="PDBsum" id="3WZN"/>
<dbReference type="PDBsum" id="3WZO"/>
<dbReference type="PDBsum" id="3WZP"/>
<dbReference type="PDBsum" id="3WZQ"/>
<dbReference type="PDBsum" id="3X00"/>
<dbReference type="PDBsum" id="4BX5"/>
<dbReference type="PDBsum" id="4BX6"/>
<dbReference type="PDBsum" id="4BX7"/>
<dbReference type="PDBsum" id="4CPE"/>
<dbReference type="PDBsum" id="4CPF"/>
<dbReference type="PDBsum" id="4CPH"/>
<dbReference type="PDBsum" id="4CPI"/>
<dbReference type="PDBsum" id="4DNE"/>
<dbReference type="PDBsum" id="4EKV"/>
<dbReference type="PDBsum" id="4GD9"/>
<dbReference type="PDBsum" id="4GDA"/>
<dbReference type="PDBsum" id="4GJS"/>
<dbReference type="PDBsum" id="4GJV"/>
<dbReference type="PDBsum" id="4IRW"/>
<dbReference type="PDBsum" id="4JO6"/>
<dbReference type="PDBsum" id="4OKA"/>
<dbReference type="PDBsum" id="4Y59"/>
<dbReference type="PDBsum" id="4Y5D"/>
<dbReference type="PDBsum" id="4YVB"/>
<dbReference type="PDBsum" id="5B5F"/>
<dbReference type="PDBsum" id="5B5G"/>
<dbReference type="PDBsum" id="5CSE"/>
<dbReference type="PDBsum" id="5F2B"/>
<dbReference type="PDBsum" id="5JD2"/>
<dbReference type="PDBsum" id="5K67"/>
<dbReference type="PDBsum" id="5K68"/>
<dbReference type="PDBsum" id="5L3Y"/>
<dbReference type="PDBsum" id="5N7X"/>
<dbReference type="PDBsum" id="5N89"/>
<dbReference type="PDBsum" id="5N8B"/>
<dbReference type="PDBsum" id="5N8E"/>
<dbReference type="PDBsum" id="5N8J"/>
<dbReference type="PDBsum" id="5N8T"/>
<dbReference type="PDBsum" id="5N8W"/>
<dbReference type="PDBsum" id="5N99"/>
<dbReference type="PDBsum" id="5TO2"/>
<dbReference type="PDBsum" id="5VCQ"/>
<dbReference type="PDBsum" id="5VKX"/>
<dbReference type="PDBsum" id="5VL5"/>
<dbReference type="PDBsum" id="5VL8"/>
<dbReference type="PDBsum" id="5WBA"/>
<dbReference type="PDBsum" id="5WBB"/>
<dbReference type="PDBsum" id="5WBC"/>
<dbReference type="PDBsum" id="5WBD"/>
<dbReference type="PDBsum" id="6ANX"/>
<dbReference type="PDBsum" id="6AUC"/>
<dbReference type="PDBsum" id="6AUE"/>
<dbReference type="PDBsum" id="6AUH"/>
<dbReference type="PDBsum" id="6AUL"/>
<dbReference type="PDBsum" id="6AUO"/>
<dbReference type="PDBsum" id="6AVK"/>
<dbReference type="PDBsum" id="6ESS"/>
<dbReference type="PDBsum" id="6ESU"/>
<dbReference type="PDBsum" id="6FH8"/>
<dbReference type="PDBsum" id="6FRY"/>
<dbReference type="PDBsum" id="6GH7"/>
<dbReference type="PDBsum" id="6J6J"/>
<dbReference type="PDBsum" id="6J6K"/>
<dbReference type="PDBsum" id="6LNG"/>
<dbReference type="PDBsum" id="6M9B"/>
<dbReference type="PDBsum" id="6QBB"/>
<dbReference type="PDBsum" id="6QSY"/>
<dbReference type="PDBsum" id="6QW4"/>
<dbReference type="PDBsum" id="6S4Q"/>
<dbReference type="PDBsum" id="6S50"/>
<dbReference type="PDBsum" id="6SOK"/>
<dbReference type="PDBsum" id="6SOS"/>
<dbReference type="PDBsum" id="6T1E"/>
<dbReference type="PDBsum" id="6T1G"/>
<dbReference type="PDBsum" id="6T1K"/>
<dbReference type="PDBsum" id="6T2L"/>
<dbReference type="PDBsum" id="6T2Y"/>
<dbReference type="PDBsum" id="6T2Z"/>
<dbReference type="PDBsum" id="6T30"/>
<dbReference type="PDBsum" id="6T31"/>
<dbReference type="PDBsum" id="6T32"/>
<dbReference type="PDBsum" id="6TIP"/>
<dbReference type="PDBsum" id="6UC3"/>
<dbReference type="PDBsum" id="6UD1"/>
<dbReference type="PDBsum" id="6UD6"/>
<dbReference type="PDBsum" id="6UDB"/>
<dbReference type="PDBsum" id="6UDC"/>
<dbReference type="PDBsum" id="6UI0"/>
<dbReference type="PDBsum" id="6UIU"/>
<dbReference type="PDBsum" id="6UIY"/>
<dbReference type="PDBsum" id="6UIZ"/>
<dbReference type="PDBsum" id="6US6"/>
<dbReference type="PDBsum" id="6VJK"/>
<dbReference type="PDBsum" id="6VJL"/>
<dbReference type="PDBsum" id="6VO9"/>
<dbReference type="PDBsum" id="6VOB"/>
<dbReference type="PDBsum" id="6VOZ"/>
<dbReference type="PDBsum" id="6VP1"/>
<dbReference type="PDBsum" id="6VP2"/>
<dbReference type="PDBsum" id="6VP3"/>
<dbReference type="PDBsum" id="6Y25"/>
<dbReference type="PDBsum" id="6Y2M"/>
<dbReference type="PDBsum" id="6Y2T"/>
<dbReference type="PDBsum" id="6Y33"/>
<dbReference type="PDBsum" id="6Y34"/>
<dbReference type="PDBsum" id="6Y3Q"/>
<dbReference type="PDBsum" id="7ALX"/>
<dbReference type="PDBsum" id="7B74"/>
<dbReference type="PDBsum" id="7DY0"/>
<dbReference type="PDBsum" id="7EFC"/>
<dbReference type="PDBsum" id="7EFD"/>
<dbReference type="PDBsum" id="7EK8"/>
<dbReference type="PDBsum" id="7EK9"/>
<dbReference type="PDBsum" id="7KBY"/>
<dbReference type="PDBsum" id="7KBZ"/>
<dbReference type="PDBsum" id="7KNL"/>
<dbReference type="PDBsum" id="7NLV"/>
<dbReference type="PDBsum" id="7ZOF"/>
<dbReference type="PDBsum" id="7ZX9"/>
<dbReference type="PDBsum" id="7ZXZ"/>
<dbReference type="PDBsum" id="8AQD"/>
<dbReference type="PDBsum" id="8AQJ"/>
<dbReference type="PDBsum" id="8AQO"/>
<dbReference type="PDBsum" id="8AQX"/>
<dbReference type="PDBsum" id="8AQY"/>
<dbReference type="PDBsum" id="8BY0"/>
<dbReference type="PDBsum" id="8BY1"/>
<dbReference type="PDBsum" id="8CRN"/>
<dbReference type="PDBsum" id="8CRP"/>
<dbReference type="PDBsum" id="8GOG"/>
<dbReference type="PDBsum" id="8GVK"/>
<dbReference type="PDBsum" id="8HRM"/>
<dbReference type="PDBsum" id="8OJW"/>
<dbReference type="PDBsum" id="8OJX"/>
<dbReference type="PDBsum" id="8P5Y"/>
<dbReference type="PDBsum" id="8P5Z"/>
<dbReference type="PDBsum" id="8PXG"/>
<dbReference type="PDBsum" id="8QQ3"/>
<dbReference type="PDBsum" id="8TY0"/>
<dbReference type="PDBsum" id="8XG4"/>
<dbReference type="PDBsum" id="8XG5"/>
<dbReference type="PDBsum" id="8XG6"/>
<dbReference type="PDBsum" id="8Y23"/>
<dbReference type="PDBsum" id="8Y24"/>
<dbReference type="PDBsum" id="8Y25"/>
<dbReference type="PDBsum" id="8Y26"/>
<dbReference type="PDBsum" id="8Y27"/>
<dbReference type="PDBsum" id="8Y28"/>
<dbReference type="PDBsum" id="8Y29"/>
<dbReference type="PDBsum" id="8Y2A"/>
<dbReference type="PDBsum" id="8Y2B"/>
<dbReference type="PDBsum" id="9CST"/>
<dbReference type="PDBsum" id="9CSU"/>
<dbReference type="PDBsum" id="9CSV"/>
<dbReference type="PDBsum" id="9CSW"/>
<dbReference type="PDBsum" id="9E6Z"/>
<dbReference type="PDBsum" id="9FFJ"/>
<dbReference type="PDBsum" id="9FNR"/>
<dbReference type="PDBsum" id="9FOA"/>
<dbReference type="EMDB" id="EMD-0689"/>
<dbReference type="EMDB" id="EMD-0690"/>
<dbReference type="EMDB" id="EMD-3090"/>
<dbReference type="EMDB" id="EMD-3091"/>
<dbReference type="EMDB" id="EMD-30913"/>
<dbReference type="EMDB" id="EMD-31083"/>
<dbReference type="EMDB" id="EMD-31084"/>
<dbReference type="EMDB" id="EMD-34978"/>
<dbReference type="PCDDB" id="P22629"/>
<dbReference type="SMR" id="P22629"/>
<dbReference type="BindingDB" id="P22629"/>
<dbReference type="ChEMBL" id="CHEMBL1075026"/>
<dbReference type="DrugBank" id="DB08196">
    <property type="generic name" value="2-((3',5'-DIMETHOXY-4'-HYDROXYPHENYL)AZO)BENZOIC ACID"/>
</dbReference>
<dbReference type="DrugBank" id="DB07667">
    <property type="generic name" value="2-((3',5'-DIMETHYL-4'-HYDROXYPHENYL)AZO)BENZOIC ACID"/>
</dbReference>
<dbReference type="DrugBank" id="DB08181">
    <property type="generic name" value="2-((3'-METHYL-4'-HYDROXYPHENYL)AZO)BENZOIC ACID"/>
</dbReference>
<dbReference type="DrugBank" id="DB08216">
    <property type="generic name" value="2-((3'-TERTBUTYL-4'-HYDROXYPHENYL)AZO)BENZOIC ACID"/>
</dbReference>
<dbReference type="DrugBank" id="DB08252">
    <property type="generic name" value="2-((4'-HYDROXYNAPHTHYL)-AZO)BENZOIC ACID"/>
</dbReference>
<dbReference type="DrugBank" id="DB07880">
    <property type="generic name" value="2-((4'-HYDROXYPHENYL)-AZO)BENZOIC ACID"/>
</dbReference>
<dbReference type="DrugBank" id="DB03353">
    <property type="generic name" value="2-Iminobiotin"/>
</dbReference>
<dbReference type="DrugBank" id="DB02674">
    <property type="generic name" value="4-(2-Oxo-Hexahydro-Thieno[3,4-D]Imidazol-4-Yl)-Butyricacid"/>
</dbReference>
<dbReference type="DrugBank" id="DB04650">
    <property type="generic name" value="5-[(3AS,4R,6AR)-2-OXOHEXAHYDRO-1H-THIENO[3,4-D]IMIDAZOL-4-YL]PENTANOIC ACID"/>
</dbReference>
<dbReference type="DrugBank" id="DB03112">
    <property type="generic name" value="6-(2-Oxo-Hexahydro-Thieno[3,4-D]Imidazol-4-Yl)-Hexanoic Acid"/>
</dbReference>
<dbReference type="DrugBank" id="DB03139">
    <property type="generic name" value="6-[5-(2-Oxo-Hexahydro-Thieno[3,4-D]Imidazol-4-Yl)-Pentanoylamino]-Hexanoic Acid"/>
</dbReference>
<dbReference type="DrugBank" id="DB03533">
    <property type="generic name" value="Acetyleneurea"/>
</dbReference>
<dbReference type="DrugBank" id="DB03549">
    <property type="generic name" value="Biotinyl P-Nitroaniline"/>
</dbReference>
<dbReference type="DrugBank" id="DB01942">
    <property type="generic name" value="Formic acid"/>
</dbReference>
<dbReference type="DrugBank" id="DB04464">
    <property type="generic name" value="N-Formylmethionine"/>
</dbReference>
<dbReference type="SABIO-RK" id="P22629"/>
<dbReference type="EvolutionaryTrace" id="P22629"/>
<dbReference type="GO" id="GO:0005576">
    <property type="term" value="C:extracellular region"/>
    <property type="evidence" value="ECO:0007669"/>
    <property type="project" value="UniProtKB-SubCell"/>
</dbReference>
<dbReference type="GO" id="GO:0009374">
    <property type="term" value="F:biotin binding"/>
    <property type="evidence" value="ECO:0007669"/>
    <property type="project" value="InterPro"/>
</dbReference>
<dbReference type="Gene3D" id="2.40.128.30">
    <property type="entry name" value="Avidin-like"/>
    <property type="match status" value="1"/>
</dbReference>
<dbReference type="InterPro" id="IPR005469">
    <property type="entry name" value="Avidin"/>
</dbReference>
<dbReference type="InterPro" id="IPR017889">
    <property type="entry name" value="Avidin-like_CS"/>
</dbReference>
<dbReference type="InterPro" id="IPR036896">
    <property type="entry name" value="Avidin-like_sf"/>
</dbReference>
<dbReference type="InterPro" id="IPR005468">
    <property type="entry name" value="Avidin/str"/>
</dbReference>
<dbReference type="InterPro" id="IPR051764">
    <property type="entry name" value="Avidin/Streptavidin-rel"/>
</dbReference>
<dbReference type="NCBIfam" id="NF047623">
    <property type="entry name" value="Stavidin"/>
    <property type="match status" value="1"/>
</dbReference>
<dbReference type="PANTHER" id="PTHR34399">
    <property type="entry name" value="AVIDIN-RELATED"/>
    <property type="match status" value="1"/>
</dbReference>
<dbReference type="Pfam" id="PF01382">
    <property type="entry name" value="Avidin"/>
    <property type="match status" value="1"/>
</dbReference>
<dbReference type="PRINTS" id="PR00709">
    <property type="entry name" value="AVIDIN"/>
</dbReference>
<dbReference type="SUPFAM" id="SSF50876">
    <property type="entry name" value="Avidin/streptavidin"/>
    <property type="match status" value="1"/>
</dbReference>
<dbReference type="PROSITE" id="PS00577">
    <property type="entry name" value="AVIDIN_1"/>
    <property type="match status" value="1"/>
</dbReference>
<dbReference type="PROSITE" id="PS51326">
    <property type="entry name" value="AVIDIN_2"/>
    <property type="match status" value="1"/>
</dbReference>